<dbReference type="EMBL" id="AL132954">
    <property type="protein sequence ID" value="CAB75767.1"/>
    <property type="molecule type" value="Genomic_DNA"/>
</dbReference>
<dbReference type="EMBL" id="CP002686">
    <property type="protein sequence ID" value="AEE79369.1"/>
    <property type="molecule type" value="Genomic_DNA"/>
</dbReference>
<dbReference type="EMBL" id="AF419553">
    <property type="protein sequence ID" value="AAL31885.1"/>
    <property type="molecule type" value="mRNA"/>
</dbReference>
<dbReference type="EMBL" id="AY097338">
    <property type="protein sequence ID" value="AAM19854.1"/>
    <property type="molecule type" value="mRNA"/>
</dbReference>
<dbReference type="EMBL" id="AY087663">
    <property type="protein sequence ID" value="AAM65201.1"/>
    <property type="molecule type" value="mRNA"/>
</dbReference>
<dbReference type="PIR" id="PA0046">
    <property type="entry name" value="PA0046"/>
</dbReference>
<dbReference type="PIR" id="T47672">
    <property type="entry name" value="T47672"/>
</dbReference>
<dbReference type="RefSeq" id="NP_191093.1">
    <property type="nucleotide sequence ID" value="NM_115391.5"/>
</dbReference>
<dbReference type="SMR" id="P82538"/>
<dbReference type="FunCoup" id="P82538">
    <property type="interactions" value="1509"/>
</dbReference>
<dbReference type="STRING" id="3702.P82538"/>
<dbReference type="PaxDb" id="3702-AT3G55330.1"/>
<dbReference type="ProteomicsDB" id="226489"/>
<dbReference type="EnsemblPlants" id="AT3G55330.1">
    <property type="protein sequence ID" value="AT3G55330.1"/>
    <property type="gene ID" value="AT3G55330"/>
</dbReference>
<dbReference type="GeneID" id="824699"/>
<dbReference type="Gramene" id="AT3G55330.1">
    <property type="protein sequence ID" value="AT3G55330.1"/>
    <property type="gene ID" value="AT3G55330"/>
</dbReference>
<dbReference type="KEGG" id="ath:AT3G55330"/>
<dbReference type="Araport" id="AT3G55330"/>
<dbReference type="TAIR" id="AT3G55330">
    <property type="gene designation" value="PPL1"/>
</dbReference>
<dbReference type="eggNOG" id="ENOG502QU2U">
    <property type="taxonomic scope" value="Eukaryota"/>
</dbReference>
<dbReference type="HOGENOM" id="CLU_039569_1_0_1"/>
<dbReference type="InParanoid" id="P82538"/>
<dbReference type="OMA" id="FLYPNGW"/>
<dbReference type="OrthoDB" id="2014109at2759"/>
<dbReference type="PhylomeDB" id="P82538"/>
<dbReference type="PRO" id="PR:P82538"/>
<dbReference type="Proteomes" id="UP000006548">
    <property type="component" value="Chromosome 3"/>
</dbReference>
<dbReference type="ExpressionAtlas" id="P82538">
    <property type="expression patterns" value="baseline and differential"/>
</dbReference>
<dbReference type="GO" id="GO:0009507">
    <property type="term" value="C:chloroplast"/>
    <property type="evidence" value="ECO:0007005"/>
    <property type="project" value="TAIR"/>
</dbReference>
<dbReference type="GO" id="GO:0009543">
    <property type="term" value="C:chloroplast thylakoid lumen"/>
    <property type="evidence" value="ECO:0007669"/>
    <property type="project" value="UniProtKB-SubCell"/>
</dbReference>
<dbReference type="GO" id="GO:0098807">
    <property type="term" value="C:chloroplast thylakoid membrane protein complex"/>
    <property type="evidence" value="ECO:0000314"/>
    <property type="project" value="TAIR"/>
</dbReference>
<dbReference type="GO" id="GO:0005829">
    <property type="term" value="C:cytosol"/>
    <property type="evidence" value="ECO:0007005"/>
    <property type="project" value="TAIR"/>
</dbReference>
<dbReference type="GO" id="GO:0019898">
    <property type="term" value="C:extrinsic component of membrane"/>
    <property type="evidence" value="ECO:0007669"/>
    <property type="project" value="InterPro"/>
</dbReference>
<dbReference type="GO" id="GO:0009654">
    <property type="term" value="C:photosystem II oxygen evolving complex"/>
    <property type="evidence" value="ECO:0007669"/>
    <property type="project" value="InterPro"/>
</dbReference>
<dbReference type="GO" id="GO:0009579">
    <property type="term" value="C:thylakoid"/>
    <property type="evidence" value="ECO:0007005"/>
    <property type="project" value="TAIR"/>
</dbReference>
<dbReference type="GO" id="GO:0031977">
    <property type="term" value="C:thylakoid lumen"/>
    <property type="evidence" value="ECO:0000314"/>
    <property type="project" value="TAIR"/>
</dbReference>
<dbReference type="GO" id="GO:0042651">
    <property type="term" value="C:thylakoid membrane"/>
    <property type="evidence" value="ECO:0000314"/>
    <property type="project" value="TAIR"/>
</dbReference>
<dbReference type="GO" id="GO:0005509">
    <property type="term" value="F:calcium ion binding"/>
    <property type="evidence" value="ECO:0007669"/>
    <property type="project" value="InterPro"/>
</dbReference>
<dbReference type="GO" id="GO:0015979">
    <property type="term" value="P:photosynthesis"/>
    <property type="evidence" value="ECO:0007669"/>
    <property type="project" value="InterPro"/>
</dbReference>
<dbReference type="FunFam" id="3.40.1000.10:FF:000015">
    <property type="entry name" value="PsbP-like protein 1, chloroplastic"/>
    <property type="match status" value="1"/>
</dbReference>
<dbReference type="Gene3D" id="3.40.1000.10">
    <property type="entry name" value="Mog1/PsbP, alpha/beta/alpha sandwich"/>
    <property type="match status" value="1"/>
</dbReference>
<dbReference type="InterPro" id="IPR016123">
    <property type="entry name" value="Mog1/PsbP_a/b/a-sand"/>
</dbReference>
<dbReference type="InterPro" id="IPR002683">
    <property type="entry name" value="PsbP_C"/>
</dbReference>
<dbReference type="NCBIfam" id="NF040946">
    <property type="entry name" value="PSII_PsbP"/>
    <property type="match status" value="1"/>
</dbReference>
<dbReference type="PANTHER" id="PTHR31407">
    <property type="match status" value="1"/>
</dbReference>
<dbReference type="PANTHER" id="PTHR31407:SF4">
    <property type="entry name" value="PSBP-LIKE PROTEIN 1, CHLOROPLASTIC"/>
    <property type="match status" value="1"/>
</dbReference>
<dbReference type="Pfam" id="PF01789">
    <property type="entry name" value="PsbP"/>
    <property type="match status" value="1"/>
</dbReference>
<dbReference type="SUPFAM" id="SSF55724">
    <property type="entry name" value="Mog1p/PsbP-like"/>
    <property type="match status" value="1"/>
</dbReference>
<comment type="function">
    <text evidence="3">Required for efficient repair of photodamaged PSII, but not tightly associated with the complex.</text>
</comment>
<comment type="subcellular location">
    <subcellularLocation>
        <location evidence="2 4">Plastid</location>
        <location evidence="2 4">Chloroplast thylakoid lumen</location>
    </subcellularLocation>
</comment>
<comment type="disruption phenotype">
    <text evidence="3">No visible phenotype.</text>
</comment>
<comment type="similarity">
    <text evidence="5">Belongs to the PsbP family.</text>
</comment>
<proteinExistence type="evidence at protein level"/>
<organism>
    <name type="scientific">Arabidopsis thaliana</name>
    <name type="common">Mouse-ear cress</name>
    <dbReference type="NCBI Taxonomy" id="3702"/>
    <lineage>
        <taxon>Eukaryota</taxon>
        <taxon>Viridiplantae</taxon>
        <taxon>Streptophyta</taxon>
        <taxon>Embryophyta</taxon>
        <taxon>Tracheophyta</taxon>
        <taxon>Spermatophyta</taxon>
        <taxon>Magnoliopsida</taxon>
        <taxon>eudicotyledons</taxon>
        <taxon>Gunneridae</taxon>
        <taxon>Pentapetalae</taxon>
        <taxon>rosids</taxon>
        <taxon>malvids</taxon>
        <taxon>Brassicales</taxon>
        <taxon>Brassicaceae</taxon>
        <taxon>Camelineae</taxon>
        <taxon>Arabidopsis</taxon>
    </lineage>
</organism>
<reference key="1">
    <citation type="journal article" date="2000" name="Nature">
        <title>Sequence and analysis of chromosome 3 of the plant Arabidopsis thaliana.</title>
        <authorList>
            <person name="Salanoubat M."/>
            <person name="Lemcke K."/>
            <person name="Rieger M."/>
            <person name="Ansorge W."/>
            <person name="Unseld M."/>
            <person name="Fartmann B."/>
            <person name="Valle G."/>
            <person name="Bloecker H."/>
            <person name="Perez-Alonso M."/>
            <person name="Obermaier B."/>
            <person name="Delseny M."/>
            <person name="Boutry M."/>
            <person name="Grivell L.A."/>
            <person name="Mache R."/>
            <person name="Puigdomenech P."/>
            <person name="De Simone V."/>
            <person name="Choisne N."/>
            <person name="Artiguenave F."/>
            <person name="Robert C."/>
            <person name="Brottier P."/>
            <person name="Wincker P."/>
            <person name="Cattolico L."/>
            <person name="Weissenbach J."/>
            <person name="Saurin W."/>
            <person name="Quetier F."/>
            <person name="Schaefer M."/>
            <person name="Mueller-Auer S."/>
            <person name="Gabel C."/>
            <person name="Fuchs M."/>
            <person name="Benes V."/>
            <person name="Wurmbach E."/>
            <person name="Drzonek H."/>
            <person name="Erfle H."/>
            <person name="Jordan N."/>
            <person name="Bangert S."/>
            <person name="Wiedelmann R."/>
            <person name="Kranz H."/>
            <person name="Voss H."/>
            <person name="Holland R."/>
            <person name="Brandt P."/>
            <person name="Nyakatura G."/>
            <person name="Vezzi A."/>
            <person name="D'Angelo M."/>
            <person name="Pallavicini A."/>
            <person name="Toppo S."/>
            <person name="Simionati B."/>
            <person name="Conrad A."/>
            <person name="Hornischer K."/>
            <person name="Kauer G."/>
            <person name="Loehnert T.-H."/>
            <person name="Nordsiek G."/>
            <person name="Reichelt J."/>
            <person name="Scharfe M."/>
            <person name="Schoen O."/>
            <person name="Bargues M."/>
            <person name="Terol J."/>
            <person name="Climent J."/>
            <person name="Navarro P."/>
            <person name="Collado C."/>
            <person name="Perez-Perez A."/>
            <person name="Ottenwaelder B."/>
            <person name="Duchemin D."/>
            <person name="Cooke R."/>
            <person name="Laudie M."/>
            <person name="Berger-Llauro C."/>
            <person name="Purnelle B."/>
            <person name="Masuy D."/>
            <person name="de Haan M."/>
            <person name="Maarse A.C."/>
            <person name="Alcaraz J.-P."/>
            <person name="Cottet A."/>
            <person name="Casacuberta E."/>
            <person name="Monfort A."/>
            <person name="Argiriou A."/>
            <person name="Flores M."/>
            <person name="Liguori R."/>
            <person name="Vitale D."/>
            <person name="Mannhaupt G."/>
            <person name="Haase D."/>
            <person name="Schoof H."/>
            <person name="Rudd S."/>
            <person name="Zaccaria P."/>
            <person name="Mewes H.-W."/>
            <person name="Mayer K.F.X."/>
            <person name="Kaul S."/>
            <person name="Town C.D."/>
            <person name="Koo H.L."/>
            <person name="Tallon L.J."/>
            <person name="Jenkins J."/>
            <person name="Rooney T."/>
            <person name="Rizzo M."/>
            <person name="Walts A."/>
            <person name="Utterback T."/>
            <person name="Fujii C.Y."/>
            <person name="Shea T.P."/>
            <person name="Creasy T.H."/>
            <person name="Haas B."/>
            <person name="Maiti R."/>
            <person name="Wu D."/>
            <person name="Peterson J."/>
            <person name="Van Aken S."/>
            <person name="Pai G."/>
            <person name="Militscher J."/>
            <person name="Sellers P."/>
            <person name="Gill J.E."/>
            <person name="Feldblyum T.V."/>
            <person name="Preuss D."/>
            <person name="Lin X."/>
            <person name="Nierman W.C."/>
            <person name="Salzberg S.L."/>
            <person name="White O."/>
            <person name="Venter J.C."/>
            <person name="Fraser C.M."/>
            <person name="Kaneko T."/>
            <person name="Nakamura Y."/>
            <person name="Sato S."/>
            <person name="Kato T."/>
            <person name="Asamizu E."/>
            <person name="Sasamoto S."/>
            <person name="Kimura T."/>
            <person name="Idesawa K."/>
            <person name="Kawashima K."/>
            <person name="Kishida Y."/>
            <person name="Kiyokawa C."/>
            <person name="Kohara M."/>
            <person name="Matsumoto M."/>
            <person name="Matsuno A."/>
            <person name="Muraki A."/>
            <person name="Nakayama S."/>
            <person name="Nakazaki N."/>
            <person name="Shinpo S."/>
            <person name="Takeuchi C."/>
            <person name="Wada T."/>
            <person name="Watanabe A."/>
            <person name="Yamada M."/>
            <person name="Yasuda M."/>
            <person name="Tabata S."/>
        </authorList>
    </citation>
    <scope>NUCLEOTIDE SEQUENCE [LARGE SCALE GENOMIC DNA]</scope>
    <source>
        <strain>cv. Columbia</strain>
    </source>
</reference>
<reference key="2">
    <citation type="journal article" date="2017" name="Plant J.">
        <title>Araport11: a complete reannotation of the Arabidopsis thaliana reference genome.</title>
        <authorList>
            <person name="Cheng C.Y."/>
            <person name="Krishnakumar V."/>
            <person name="Chan A.P."/>
            <person name="Thibaud-Nissen F."/>
            <person name="Schobel S."/>
            <person name="Town C.D."/>
        </authorList>
    </citation>
    <scope>GENOME REANNOTATION</scope>
    <source>
        <strain>cv. Columbia</strain>
    </source>
</reference>
<reference key="3">
    <citation type="journal article" date="2003" name="Science">
        <title>Empirical analysis of transcriptional activity in the Arabidopsis genome.</title>
        <authorList>
            <person name="Yamada K."/>
            <person name="Lim J."/>
            <person name="Dale J.M."/>
            <person name="Chen H."/>
            <person name="Shinn P."/>
            <person name="Palm C.J."/>
            <person name="Southwick A.M."/>
            <person name="Wu H.C."/>
            <person name="Kim C.J."/>
            <person name="Nguyen M."/>
            <person name="Pham P.K."/>
            <person name="Cheuk R.F."/>
            <person name="Karlin-Newmann G."/>
            <person name="Liu S.X."/>
            <person name="Lam B."/>
            <person name="Sakano H."/>
            <person name="Wu T."/>
            <person name="Yu G."/>
            <person name="Miranda M."/>
            <person name="Quach H.L."/>
            <person name="Tripp M."/>
            <person name="Chang C.H."/>
            <person name="Lee J.M."/>
            <person name="Toriumi M.J."/>
            <person name="Chan M.M."/>
            <person name="Tang C.C."/>
            <person name="Onodera C.S."/>
            <person name="Deng J.M."/>
            <person name="Akiyama K."/>
            <person name="Ansari Y."/>
            <person name="Arakawa T."/>
            <person name="Banh J."/>
            <person name="Banno F."/>
            <person name="Bowser L."/>
            <person name="Brooks S.Y."/>
            <person name="Carninci P."/>
            <person name="Chao Q."/>
            <person name="Choy N."/>
            <person name="Enju A."/>
            <person name="Goldsmith A.D."/>
            <person name="Gurjal M."/>
            <person name="Hansen N.F."/>
            <person name="Hayashizaki Y."/>
            <person name="Johnson-Hopson C."/>
            <person name="Hsuan V.W."/>
            <person name="Iida K."/>
            <person name="Karnes M."/>
            <person name="Khan S."/>
            <person name="Koesema E."/>
            <person name="Ishida J."/>
            <person name="Jiang P.X."/>
            <person name="Jones T."/>
            <person name="Kawai J."/>
            <person name="Kamiya A."/>
            <person name="Meyers C."/>
            <person name="Nakajima M."/>
            <person name="Narusaka M."/>
            <person name="Seki M."/>
            <person name="Sakurai T."/>
            <person name="Satou M."/>
            <person name="Tamse R."/>
            <person name="Vaysberg M."/>
            <person name="Wallender E.K."/>
            <person name="Wong C."/>
            <person name="Yamamura Y."/>
            <person name="Yuan S."/>
            <person name="Shinozaki K."/>
            <person name="Davis R.W."/>
            <person name="Theologis A."/>
            <person name="Ecker J.R."/>
        </authorList>
    </citation>
    <scope>NUCLEOTIDE SEQUENCE [LARGE SCALE MRNA]</scope>
    <source>
        <strain>cv. Columbia</strain>
    </source>
</reference>
<reference key="4">
    <citation type="submission" date="2002-03" db="EMBL/GenBank/DDBJ databases">
        <title>Full-length cDNA from Arabidopsis thaliana.</title>
        <authorList>
            <person name="Brover V.V."/>
            <person name="Troukhan M.E."/>
            <person name="Alexandrov N.A."/>
            <person name="Lu Y.-P."/>
            <person name="Flavell R.B."/>
            <person name="Feldmann K.A."/>
        </authorList>
    </citation>
    <scope>NUCLEOTIDE SEQUENCE [LARGE SCALE MRNA]</scope>
</reference>
<reference key="5">
    <citation type="journal article" date="2002" name="J. Biol. Chem.">
        <title>Proteome map of the chloroplast lumen of Arabidopsis thaliana.</title>
        <authorList>
            <person name="Schubert M."/>
            <person name="Petersson U.A."/>
            <person name="Haas B.J."/>
            <person name="Funk C."/>
            <person name="Schroeder W.P."/>
            <person name="Kieselbach T."/>
        </authorList>
    </citation>
    <scope>PROTEIN SEQUENCE OF 75-110</scope>
    <scope>SUBCELLULAR LOCATION</scope>
</reference>
<reference key="6">
    <citation type="journal article" date="2007" name="Plant Physiol.">
        <title>Distinct functions for the two PsbP-like proteins PPL1 and PPL2 in the chloroplast thylakoid lumen of Arabidopsis.</title>
        <authorList>
            <person name="Ishihara S."/>
            <person name="Takabayashi A."/>
            <person name="Ido K."/>
            <person name="Endo T."/>
            <person name="Ifuku K."/>
            <person name="Sato F."/>
        </authorList>
    </citation>
    <scope>FUNCTION</scope>
    <scope>GENE FAMILY</scope>
    <scope>NOMENCLATURE</scope>
    <scope>DISRUPTION PHENOTYPE</scope>
</reference>
<reference key="7">
    <citation type="journal article" date="2008" name="PLoS ONE">
        <title>Sorting signals, N-terminal modifications and abundance of the chloroplast proteome.</title>
        <authorList>
            <person name="Zybailov B."/>
            <person name="Rutschow H."/>
            <person name="Friso G."/>
            <person name="Rudella A."/>
            <person name="Emanuelsson O."/>
            <person name="Sun Q."/>
            <person name="van Wijk K.J."/>
        </authorList>
    </citation>
    <scope>IDENTIFICATION BY MASS SPECTROMETRY</scope>
    <scope>SUBCELLULAR LOCATION [LARGE SCALE ANALYSIS]</scope>
</reference>
<reference key="8">
    <citation type="journal article" date="2012" name="J. Proteome Res.">
        <title>Identification of phosphoproteins in Arabidopsis thaliana leaves using polyethylene glycol fractionation, immobilized metal-ion affinity chromatography, two-dimensional gel electrophoresis and mass spectrometry.</title>
        <authorList>
            <person name="Aryal U.K."/>
            <person name="Krochko J.E."/>
            <person name="Ross A.R."/>
        </authorList>
    </citation>
    <scope>IDENTIFICATION BY MASS SPECTROMETRY [LARGE SCALE ANALYSIS]</scope>
</reference>
<evidence type="ECO:0000255" key="1"/>
<evidence type="ECO:0000269" key="2">
    <source>
    </source>
</evidence>
<evidence type="ECO:0000269" key="3">
    <source>
    </source>
</evidence>
<evidence type="ECO:0000269" key="4">
    <source>
    </source>
</evidence>
<evidence type="ECO:0000305" key="5"/>
<gene>
    <name type="primary">PPL1</name>
    <name type="ordered locus">At3g55330</name>
    <name type="ORF">T26I12.210</name>
</gene>
<accession>P82538</accession>
<name>PPL1_ARATH</name>
<protein>
    <recommendedName>
        <fullName>PsbP-like protein 1, chloroplastic</fullName>
    </recommendedName>
    <alternativeName>
        <fullName>OEC23-like protein 4</fullName>
    </alternativeName>
    <alternativeName>
        <fullName>PsbP-related thylakoid lumenal protein 2</fullName>
    </alternativeName>
</protein>
<keyword id="KW-0150">Chloroplast</keyword>
<keyword id="KW-0903">Direct protein sequencing</keyword>
<keyword id="KW-0934">Plastid</keyword>
<keyword id="KW-1185">Reference proteome</keyword>
<keyword id="KW-0793">Thylakoid</keyword>
<keyword id="KW-0809">Transit peptide</keyword>
<feature type="transit peptide" description="Chloroplast" evidence="1">
    <location>
        <begin position="1"/>
        <end status="unknown"/>
    </location>
</feature>
<feature type="transit peptide" description="Thylakoid" evidence="2">
    <location>
        <begin status="unknown"/>
        <end position="74"/>
    </location>
</feature>
<feature type="chain" id="PRO_0000029588" description="PsbP-like protein 1, chloroplastic">
    <location>
        <begin position="75"/>
        <end position="230"/>
    </location>
</feature>
<sequence>MASLKLSPSSPISISKVGVIPSSKKGLSFLVKAEHHSSSSSSHLQDKCQRRLIVTFGVVAPWISLLSRAPLSFAAESKKGFLAVSDNKDAYAFLYPFGWQEVVIEGQDKVYKDVIEPLESVSVNLVPTSKQTIKEFGPPKQIAETLIKKVLAPPNQKTTLIDASEHDVDGKTYYQFEFTVQARNYTRHALGTITVFNGNFYTLTTGANERRWEKMKDRLHTVVDSFKITV</sequence>